<organism>
    <name type="scientific">Rippkaea orientalis (strain PCC 8801 / RF-1)</name>
    <name type="common">Cyanothece sp. (strain PCC 8801)</name>
    <dbReference type="NCBI Taxonomy" id="41431"/>
    <lineage>
        <taxon>Bacteria</taxon>
        <taxon>Bacillati</taxon>
        <taxon>Cyanobacteriota</taxon>
        <taxon>Cyanophyceae</taxon>
        <taxon>Oscillatoriophycideae</taxon>
        <taxon>Chroococcales</taxon>
        <taxon>Aphanothecaceae</taxon>
        <taxon>Rippkaea</taxon>
        <taxon>Rippkaea orientalis</taxon>
    </lineage>
</organism>
<sequence length="296" mass="32765">MSISWWEISVLCHPNLEESIFWRLDQFGCSGTARETKGKSFLIRAYVPKMQAQTLDLAALSLWLKQDAILLDSPPPLTHWKLIDDEDWASSWKDHWQPTEVGDRFLIYPAWLTLPQDGDRLILRLDPGAAFGTGTHPTTQLCLESLEMRLSVPNKEIIIADIGCGSGILSIGAVLLGATKVYAVDIDPLAVDAARSNRHLNQIHPATLVINQGSVAEVLELAPEGVDGILCNILAEVIIELIPQWTALAKPHAWAILSGILIDQSQAIADTLEQYGWVVAALWKQGEWSCLHVRRS</sequence>
<keyword id="KW-0963">Cytoplasm</keyword>
<keyword id="KW-0489">Methyltransferase</keyword>
<keyword id="KW-1185">Reference proteome</keyword>
<keyword id="KW-0949">S-adenosyl-L-methionine</keyword>
<keyword id="KW-0808">Transferase</keyword>
<protein>
    <recommendedName>
        <fullName evidence="1">Ribosomal protein L11 methyltransferase</fullName>
        <shortName evidence="1">L11 Mtase</shortName>
        <ecNumber evidence="1">2.1.1.-</ecNumber>
    </recommendedName>
</protein>
<proteinExistence type="inferred from homology"/>
<accession>B7K2J4</accession>
<dbReference type="EC" id="2.1.1.-" evidence="1"/>
<dbReference type="EMBL" id="CP001287">
    <property type="protein sequence ID" value="ACK66387.1"/>
    <property type="molecule type" value="Genomic_DNA"/>
</dbReference>
<dbReference type="RefSeq" id="WP_012595655.1">
    <property type="nucleotide sequence ID" value="NC_011726.1"/>
</dbReference>
<dbReference type="SMR" id="B7K2J4"/>
<dbReference type="STRING" id="41431.PCC8801_2376"/>
<dbReference type="KEGG" id="cyp:PCC8801_2376"/>
<dbReference type="eggNOG" id="COG2264">
    <property type="taxonomic scope" value="Bacteria"/>
</dbReference>
<dbReference type="HOGENOM" id="CLU_049382_0_1_3"/>
<dbReference type="OrthoDB" id="9785995at2"/>
<dbReference type="Proteomes" id="UP000008204">
    <property type="component" value="Chromosome"/>
</dbReference>
<dbReference type="GO" id="GO:0005737">
    <property type="term" value="C:cytoplasm"/>
    <property type="evidence" value="ECO:0007669"/>
    <property type="project" value="UniProtKB-SubCell"/>
</dbReference>
<dbReference type="GO" id="GO:0016279">
    <property type="term" value="F:protein-lysine N-methyltransferase activity"/>
    <property type="evidence" value="ECO:0007669"/>
    <property type="project" value="RHEA"/>
</dbReference>
<dbReference type="GO" id="GO:0032259">
    <property type="term" value="P:methylation"/>
    <property type="evidence" value="ECO:0007669"/>
    <property type="project" value="UniProtKB-KW"/>
</dbReference>
<dbReference type="CDD" id="cd02440">
    <property type="entry name" value="AdoMet_MTases"/>
    <property type="match status" value="1"/>
</dbReference>
<dbReference type="Gene3D" id="3.40.50.150">
    <property type="entry name" value="Vaccinia Virus protein VP39"/>
    <property type="match status" value="1"/>
</dbReference>
<dbReference type="HAMAP" id="MF_00735">
    <property type="entry name" value="Methyltr_PrmA"/>
    <property type="match status" value="1"/>
</dbReference>
<dbReference type="InterPro" id="IPR050078">
    <property type="entry name" value="Ribosomal_L11_MeTrfase_PrmA"/>
</dbReference>
<dbReference type="InterPro" id="IPR004498">
    <property type="entry name" value="Ribosomal_PrmA_MeTrfase"/>
</dbReference>
<dbReference type="InterPro" id="IPR029063">
    <property type="entry name" value="SAM-dependent_MTases_sf"/>
</dbReference>
<dbReference type="NCBIfam" id="TIGR00406">
    <property type="entry name" value="prmA"/>
    <property type="match status" value="1"/>
</dbReference>
<dbReference type="PANTHER" id="PTHR43648">
    <property type="entry name" value="ELECTRON TRANSFER FLAVOPROTEIN BETA SUBUNIT LYSINE METHYLTRANSFERASE"/>
    <property type="match status" value="1"/>
</dbReference>
<dbReference type="PANTHER" id="PTHR43648:SF1">
    <property type="entry name" value="ELECTRON TRANSFER FLAVOPROTEIN BETA SUBUNIT LYSINE METHYLTRANSFERASE"/>
    <property type="match status" value="1"/>
</dbReference>
<dbReference type="Pfam" id="PF06325">
    <property type="entry name" value="PrmA"/>
    <property type="match status" value="1"/>
</dbReference>
<dbReference type="PIRSF" id="PIRSF000401">
    <property type="entry name" value="RPL11_MTase"/>
    <property type="match status" value="1"/>
</dbReference>
<dbReference type="SUPFAM" id="SSF53335">
    <property type="entry name" value="S-adenosyl-L-methionine-dependent methyltransferases"/>
    <property type="match status" value="1"/>
</dbReference>
<gene>
    <name evidence="1" type="primary">prmA</name>
    <name type="ordered locus">PCC8801_2376</name>
</gene>
<evidence type="ECO:0000255" key="1">
    <source>
        <dbReference type="HAMAP-Rule" id="MF_00735"/>
    </source>
</evidence>
<name>PRMA_RIPO1</name>
<feature type="chain" id="PRO_1000192614" description="Ribosomal protein L11 methyltransferase">
    <location>
        <begin position="1"/>
        <end position="296"/>
    </location>
</feature>
<feature type="binding site" evidence="1">
    <location>
        <position position="139"/>
    </location>
    <ligand>
        <name>S-adenosyl-L-methionine</name>
        <dbReference type="ChEBI" id="CHEBI:59789"/>
    </ligand>
</feature>
<feature type="binding site" evidence="1">
    <location>
        <position position="163"/>
    </location>
    <ligand>
        <name>S-adenosyl-L-methionine</name>
        <dbReference type="ChEBI" id="CHEBI:59789"/>
    </ligand>
</feature>
<feature type="binding site" evidence="1">
    <location>
        <position position="185"/>
    </location>
    <ligand>
        <name>S-adenosyl-L-methionine</name>
        <dbReference type="ChEBI" id="CHEBI:59789"/>
    </ligand>
</feature>
<feature type="binding site" evidence="1">
    <location>
        <position position="232"/>
    </location>
    <ligand>
        <name>S-adenosyl-L-methionine</name>
        <dbReference type="ChEBI" id="CHEBI:59789"/>
    </ligand>
</feature>
<comment type="function">
    <text evidence="1">Methylates ribosomal protein L11.</text>
</comment>
<comment type="catalytic activity">
    <reaction evidence="1">
        <text>L-lysyl-[protein] + 3 S-adenosyl-L-methionine = N(6),N(6),N(6)-trimethyl-L-lysyl-[protein] + 3 S-adenosyl-L-homocysteine + 3 H(+)</text>
        <dbReference type="Rhea" id="RHEA:54192"/>
        <dbReference type="Rhea" id="RHEA-COMP:9752"/>
        <dbReference type="Rhea" id="RHEA-COMP:13826"/>
        <dbReference type="ChEBI" id="CHEBI:15378"/>
        <dbReference type="ChEBI" id="CHEBI:29969"/>
        <dbReference type="ChEBI" id="CHEBI:57856"/>
        <dbReference type="ChEBI" id="CHEBI:59789"/>
        <dbReference type="ChEBI" id="CHEBI:61961"/>
    </reaction>
</comment>
<comment type="subcellular location">
    <subcellularLocation>
        <location evidence="1">Cytoplasm</location>
    </subcellularLocation>
</comment>
<comment type="similarity">
    <text evidence="1">Belongs to the methyltransferase superfamily. PrmA family.</text>
</comment>
<reference key="1">
    <citation type="journal article" date="2011" name="MBio">
        <title>Novel metabolic attributes of the genus Cyanothece, comprising a group of unicellular nitrogen-fixing Cyanobacteria.</title>
        <authorList>
            <person name="Bandyopadhyay A."/>
            <person name="Elvitigala T."/>
            <person name="Welsh E."/>
            <person name="Stockel J."/>
            <person name="Liberton M."/>
            <person name="Min H."/>
            <person name="Sherman L.A."/>
            <person name="Pakrasi H.B."/>
        </authorList>
    </citation>
    <scope>NUCLEOTIDE SEQUENCE [LARGE SCALE GENOMIC DNA]</scope>
    <source>
        <strain>PCC 8801 / RF-1</strain>
    </source>
</reference>